<name>RL33_POLAQ</name>
<dbReference type="EMBL" id="CP000655">
    <property type="protein sequence ID" value="ABP34948.1"/>
    <property type="molecule type" value="Genomic_DNA"/>
</dbReference>
<dbReference type="RefSeq" id="WP_011903571.1">
    <property type="nucleotide sequence ID" value="NC_009379.1"/>
</dbReference>
<dbReference type="SMR" id="A4SZN4"/>
<dbReference type="GeneID" id="31482124"/>
<dbReference type="KEGG" id="pnu:Pnuc_1735"/>
<dbReference type="eggNOG" id="COG0267">
    <property type="taxonomic scope" value="Bacteria"/>
</dbReference>
<dbReference type="HOGENOM" id="CLU_190949_1_1_4"/>
<dbReference type="Proteomes" id="UP000000231">
    <property type="component" value="Chromosome"/>
</dbReference>
<dbReference type="GO" id="GO:0022625">
    <property type="term" value="C:cytosolic large ribosomal subunit"/>
    <property type="evidence" value="ECO:0007669"/>
    <property type="project" value="TreeGrafter"/>
</dbReference>
<dbReference type="GO" id="GO:0003735">
    <property type="term" value="F:structural constituent of ribosome"/>
    <property type="evidence" value="ECO:0007669"/>
    <property type="project" value="InterPro"/>
</dbReference>
<dbReference type="GO" id="GO:0006412">
    <property type="term" value="P:translation"/>
    <property type="evidence" value="ECO:0007669"/>
    <property type="project" value="UniProtKB-UniRule"/>
</dbReference>
<dbReference type="FunFam" id="2.20.28.120:FF:000001">
    <property type="entry name" value="50S ribosomal protein L33"/>
    <property type="match status" value="1"/>
</dbReference>
<dbReference type="Gene3D" id="2.20.28.120">
    <property type="entry name" value="Ribosomal protein L33"/>
    <property type="match status" value="1"/>
</dbReference>
<dbReference type="HAMAP" id="MF_00294">
    <property type="entry name" value="Ribosomal_bL33"/>
    <property type="match status" value="1"/>
</dbReference>
<dbReference type="InterPro" id="IPR001705">
    <property type="entry name" value="Ribosomal_bL33"/>
</dbReference>
<dbReference type="InterPro" id="IPR018264">
    <property type="entry name" value="Ribosomal_bL33_CS"/>
</dbReference>
<dbReference type="InterPro" id="IPR038584">
    <property type="entry name" value="Ribosomal_bL33_sf"/>
</dbReference>
<dbReference type="InterPro" id="IPR011332">
    <property type="entry name" value="Ribosomal_zn-bd"/>
</dbReference>
<dbReference type="NCBIfam" id="NF001860">
    <property type="entry name" value="PRK00595.1"/>
    <property type="match status" value="1"/>
</dbReference>
<dbReference type="NCBIfam" id="TIGR01023">
    <property type="entry name" value="rpmG_bact"/>
    <property type="match status" value="1"/>
</dbReference>
<dbReference type="PANTHER" id="PTHR15238">
    <property type="entry name" value="54S RIBOSOMAL PROTEIN L39, MITOCHONDRIAL"/>
    <property type="match status" value="1"/>
</dbReference>
<dbReference type="PANTHER" id="PTHR15238:SF1">
    <property type="entry name" value="LARGE RIBOSOMAL SUBUNIT PROTEIN BL33M"/>
    <property type="match status" value="1"/>
</dbReference>
<dbReference type="Pfam" id="PF00471">
    <property type="entry name" value="Ribosomal_L33"/>
    <property type="match status" value="1"/>
</dbReference>
<dbReference type="SUPFAM" id="SSF57829">
    <property type="entry name" value="Zn-binding ribosomal proteins"/>
    <property type="match status" value="1"/>
</dbReference>
<dbReference type="PROSITE" id="PS00582">
    <property type="entry name" value="RIBOSOMAL_L33"/>
    <property type="match status" value="1"/>
</dbReference>
<sequence>MAKGGREKIKLESSAGTGHFYTTSKNKRTKPEKMELMKYDPTIRKHVAYKETKLK</sequence>
<keyword id="KW-1185">Reference proteome</keyword>
<keyword id="KW-0687">Ribonucleoprotein</keyword>
<keyword id="KW-0689">Ribosomal protein</keyword>
<proteinExistence type="inferred from homology"/>
<reference key="1">
    <citation type="journal article" date="2012" name="Stand. Genomic Sci.">
        <title>Complete genome sequence of Polynucleobacter necessarius subsp. asymbioticus type strain (QLW-P1DMWA-1(T)).</title>
        <authorList>
            <person name="Meincke L."/>
            <person name="Copeland A."/>
            <person name="Lapidus A."/>
            <person name="Lucas S."/>
            <person name="Berry K.W."/>
            <person name="Del Rio T.G."/>
            <person name="Hammon N."/>
            <person name="Dalin E."/>
            <person name="Tice H."/>
            <person name="Pitluck S."/>
            <person name="Richardson P."/>
            <person name="Bruce D."/>
            <person name="Goodwin L."/>
            <person name="Han C."/>
            <person name="Tapia R."/>
            <person name="Detter J.C."/>
            <person name="Schmutz J."/>
            <person name="Brettin T."/>
            <person name="Larimer F."/>
            <person name="Land M."/>
            <person name="Hauser L."/>
            <person name="Kyrpides N.C."/>
            <person name="Ivanova N."/>
            <person name="Goker M."/>
            <person name="Woyke T."/>
            <person name="Wu Q.L."/>
            <person name="Pockl M."/>
            <person name="Hahn M.W."/>
            <person name="Klenk H.P."/>
        </authorList>
    </citation>
    <scope>NUCLEOTIDE SEQUENCE [LARGE SCALE GENOMIC DNA]</scope>
    <source>
        <strain>DSM 18221 / CIP 109841 / QLW-P1DMWA-1</strain>
    </source>
</reference>
<feature type="chain" id="PRO_1000078917" description="Large ribosomal subunit protein bL33">
    <location>
        <begin position="1"/>
        <end position="55"/>
    </location>
</feature>
<feature type="region of interest" description="Disordered" evidence="2">
    <location>
        <begin position="1"/>
        <end position="29"/>
    </location>
</feature>
<feature type="compositionally biased region" description="Basic and acidic residues" evidence="2">
    <location>
        <begin position="1"/>
        <end position="11"/>
    </location>
</feature>
<feature type="compositionally biased region" description="Polar residues" evidence="2">
    <location>
        <begin position="14"/>
        <end position="24"/>
    </location>
</feature>
<accession>A4SZN4</accession>
<gene>
    <name evidence="1" type="primary">rpmG</name>
    <name type="ordered locus">Pnuc_1735</name>
</gene>
<evidence type="ECO:0000255" key="1">
    <source>
        <dbReference type="HAMAP-Rule" id="MF_00294"/>
    </source>
</evidence>
<evidence type="ECO:0000256" key="2">
    <source>
        <dbReference type="SAM" id="MobiDB-lite"/>
    </source>
</evidence>
<evidence type="ECO:0000305" key="3"/>
<protein>
    <recommendedName>
        <fullName evidence="1">Large ribosomal subunit protein bL33</fullName>
    </recommendedName>
    <alternativeName>
        <fullName evidence="3">50S ribosomal protein L33</fullName>
    </alternativeName>
</protein>
<comment type="similarity">
    <text evidence="1">Belongs to the bacterial ribosomal protein bL33 family.</text>
</comment>
<organism>
    <name type="scientific">Polynucleobacter asymbioticus (strain DSM 18221 / CIP 109841 / QLW-P1DMWA-1)</name>
    <name type="common">Polynucleobacter necessarius subsp. asymbioticus</name>
    <dbReference type="NCBI Taxonomy" id="312153"/>
    <lineage>
        <taxon>Bacteria</taxon>
        <taxon>Pseudomonadati</taxon>
        <taxon>Pseudomonadota</taxon>
        <taxon>Betaproteobacteria</taxon>
        <taxon>Burkholderiales</taxon>
        <taxon>Burkholderiaceae</taxon>
        <taxon>Polynucleobacter</taxon>
    </lineage>
</organism>